<keyword id="KW-0963">Cytoplasm</keyword>
<keyword id="KW-0441">Lipid A biosynthesis</keyword>
<keyword id="KW-0444">Lipid biosynthesis</keyword>
<keyword id="KW-0443">Lipid metabolism</keyword>
<keyword id="KW-0456">Lyase</keyword>
<comment type="function">
    <text evidence="1">Involved in unsaturated fatty acids biosynthesis. Catalyzes the dehydration of short chain beta-hydroxyacyl-ACPs and long chain saturated and unsaturated beta-hydroxyacyl-ACPs.</text>
</comment>
<comment type="catalytic activity">
    <reaction evidence="1">
        <text>a (3R)-hydroxyacyl-[ACP] = a (2E)-enoyl-[ACP] + H2O</text>
        <dbReference type="Rhea" id="RHEA:13097"/>
        <dbReference type="Rhea" id="RHEA-COMP:9925"/>
        <dbReference type="Rhea" id="RHEA-COMP:9945"/>
        <dbReference type="ChEBI" id="CHEBI:15377"/>
        <dbReference type="ChEBI" id="CHEBI:78784"/>
        <dbReference type="ChEBI" id="CHEBI:78827"/>
        <dbReference type="EC" id="4.2.1.59"/>
    </reaction>
</comment>
<comment type="subcellular location">
    <subcellularLocation>
        <location evidence="1">Cytoplasm</location>
    </subcellularLocation>
</comment>
<comment type="similarity">
    <text evidence="1">Belongs to the thioester dehydratase family. FabZ subfamily.</text>
</comment>
<evidence type="ECO:0000255" key="1">
    <source>
        <dbReference type="HAMAP-Rule" id="MF_00406"/>
    </source>
</evidence>
<reference key="1">
    <citation type="journal article" date="2011" name="Stand. Genomic Sci.">
        <title>Complete genome sequence of the filamentous gliding predatory bacterium Herpetosiphon aurantiacus type strain (114-95(T)).</title>
        <authorList>
            <person name="Kiss H."/>
            <person name="Nett M."/>
            <person name="Domin N."/>
            <person name="Martin K."/>
            <person name="Maresca J.A."/>
            <person name="Copeland A."/>
            <person name="Lapidus A."/>
            <person name="Lucas S."/>
            <person name="Berry K.W."/>
            <person name="Glavina Del Rio T."/>
            <person name="Dalin E."/>
            <person name="Tice H."/>
            <person name="Pitluck S."/>
            <person name="Richardson P."/>
            <person name="Bruce D."/>
            <person name="Goodwin L."/>
            <person name="Han C."/>
            <person name="Detter J.C."/>
            <person name="Schmutz J."/>
            <person name="Brettin T."/>
            <person name="Land M."/>
            <person name="Hauser L."/>
            <person name="Kyrpides N.C."/>
            <person name="Ivanova N."/>
            <person name="Goeker M."/>
            <person name="Woyke T."/>
            <person name="Klenk H.P."/>
            <person name="Bryant D.A."/>
        </authorList>
    </citation>
    <scope>NUCLEOTIDE SEQUENCE [LARGE SCALE GENOMIC DNA]</scope>
    <source>
        <strain>ATCC 23779 / DSM 785 / 114-95</strain>
    </source>
</reference>
<organism>
    <name type="scientific">Herpetosiphon aurantiacus (strain ATCC 23779 / DSM 785 / 114-95)</name>
    <dbReference type="NCBI Taxonomy" id="316274"/>
    <lineage>
        <taxon>Bacteria</taxon>
        <taxon>Bacillati</taxon>
        <taxon>Chloroflexota</taxon>
        <taxon>Chloroflexia</taxon>
        <taxon>Herpetosiphonales</taxon>
        <taxon>Herpetosiphonaceae</taxon>
        <taxon>Herpetosiphon</taxon>
    </lineage>
</organism>
<name>FABZ_HERA2</name>
<dbReference type="EC" id="4.2.1.59" evidence="1"/>
<dbReference type="EMBL" id="CP000875">
    <property type="protein sequence ID" value="ABX04984.1"/>
    <property type="molecule type" value="Genomic_DNA"/>
</dbReference>
<dbReference type="SMR" id="A9AYK6"/>
<dbReference type="FunCoup" id="A9AYK6">
    <property type="interactions" value="424"/>
</dbReference>
<dbReference type="STRING" id="316274.Haur_2344"/>
<dbReference type="KEGG" id="hau:Haur_2344"/>
<dbReference type="eggNOG" id="COG0764">
    <property type="taxonomic scope" value="Bacteria"/>
</dbReference>
<dbReference type="HOGENOM" id="CLU_078912_3_0_0"/>
<dbReference type="InParanoid" id="A9AYK6"/>
<dbReference type="Proteomes" id="UP000000787">
    <property type="component" value="Chromosome"/>
</dbReference>
<dbReference type="GO" id="GO:0005737">
    <property type="term" value="C:cytoplasm"/>
    <property type="evidence" value="ECO:0007669"/>
    <property type="project" value="UniProtKB-SubCell"/>
</dbReference>
<dbReference type="GO" id="GO:0016020">
    <property type="term" value="C:membrane"/>
    <property type="evidence" value="ECO:0007669"/>
    <property type="project" value="GOC"/>
</dbReference>
<dbReference type="GO" id="GO:0019171">
    <property type="term" value="F:(3R)-hydroxyacyl-[acyl-carrier-protein] dehydratase activity"/>
    <property type="evidence" value="ECO:0007669"/>
    <property type="project" value="UniProtKB-EC"/>
</dbReference>
<dbReference type="GO" id="GO:0006633">
    <property type="term" value="P:fatty acid biosynthetic process"/>
    <property type="evidence" value="ECO:0007669"/>
    <property type="project" value="UniProtKB-UniRule"/>
</dbReference>
<dbReference type="GO" id="GO:0009245">
    <property type="term" value="P:lipid A biosynthetic process"/>
    <property type="evidence" value="ECO:0007669"/>
    <property type="project" value="UniProtKB-UniRule"/>
</dbReference>
<dbReference type="CDD" id="cd01288">
    <property type="entry name" value="FabZ"/>
    <property type="match status" value="1"/>
</dbReference>
<dbReference type="FunFam" id="3.10.129.10:FF:000001">
    <property type="entry name" value="3-hydroxyacyl-[acyl-carrier-protein] dehydratase FabZ"/>
    <property type="match status" value="1"/>
</dbReference>
<dbReference type="Gene3D" id="3.10.129.10">
    <property type="entry name" value="Hotdog Thioesterase"/>
    <property type="match status" value="1"/>
</dbReference>
<dbReference type="HAMAP" id="MF_00406">
    <property type="entry name" value="FabZ"/>
    <property type="match status" value="1"/>
</dbReference>
<dbReference type="InterPro" id="IPR013114">
    <property type="entry name" value="FabA_FabZ"/>
</dbReference>
<dbReference type="InterPro" id="IPR010084">
    <property type="entry name" value="FabZ"/>
</dbReference>
<dbReference type="InterPro" id="IPR029069">
    <property type="entry name" value="HotDog_dom_sf"/>
</dbReference>
<dbReference type="NCBIfam" id="TIGR01750">
    <property type="entry name" value="fabZ"/>
    <property type="match status" value="1"/>
</dbReference>
<dbReference type="NCBIfam" id="NF000582">
    <property type="entry name" value="PRK00006.1"/>
    <property type="match status" value="1"/>
</dbReference>
<dbReference type="PANTHER" id="PTHR30272">
    <property type="entry name" value="3-HYDROXYACYL-[ACYL-CARRIER-PROTEIN] DEHYDRATASE"/>
    <property type="match status" value="1"/>
</dbReference>
<dbReference type="PANTHER" id="PTHR30272:SF1">
    <property type="entry name" value="3-HYDROXYACYL-[ACYL-CARRIER-PROTEIN] DEHYDRATASE"/>
    <property type="match status" value="1"/>
</dbReference>
<dbReference type="Pfam" id="PF07977">
    <property type="entry name" value="FabA"/>
    <property type="match status" value="1"/>
</dbReference>
<dbReference type="SUPFAM" id="SSF54637">
    <property type="entry name" value="Thioesterase/thiol ester dehydrase-isomerase"/>
    <property type="match status" value="1"/>
</dbReference>
<accession>A9AYK6</accession>
<proteinExistence type="inferred from homology"/>
<protein>
    <recommendedName>
        <fullName evidence="1">3-hydroxyacyl-[acyl-carrier-protein] dehydratase FabZ</fullName>
        <ecNumber evidence="1">4.2.1.59</ecNumber>
    </recommendedName>
    <alternativeName>
        <fullName evidence="1">(3R)-hydroxymyristoyl-[acyl-carrier-protein] dehydratase</fullName>
        <shortName evidence="1">(3R)-hydroxymyristoyl-ACP dehydrase</shortName>
    </alternativeName>
    <alternativeName>
        <fullName evidence="1">Beta-hydroxyacyl-ACP dehydratase</fullName>
    </alternativeName>
</protein>
<feature type="chain" id="PRO_1000123644" description="3-hydroxyacyl-[acyl-carrier-protein] dehydratase FabZ">
    <location>
        <begin position="1"/>
        <end position="141"/>
    </location>
</feature>
<feature type="active site" evidence="1">
    <location>
        <position position="48"/>
    </location>
</feature>
<sequence>MLTVEDILAILPHRPPFLLVDRILEIEDGLRAVGLKNVTMNEPFFVGHFPGRPVMPGVLIVEALAQVGAVIILRQPEYVGKIVMFAGIDDFRFKRPVTPGDTLKLEVSLDKMRRRIGKGQAKATVDGTVVAEGGLMFAIVD</sequence>
<gene>
    <name evidence="1" type="primary">fabZ</name>
    <name type="ordered locus">Haur_2344</name>
</gene>